<dbReference type="EC" id="7.1.1.2" evidence="1"/>
<dbReference type="EMBL" id="AJ421723">
    <property type="protein sequence ID" value="CAD18919.1"/>
    <property type="molecule type" value="Genomic_DNA"/>
</dbReference>
<dbReference type="RefSeq" id="NP_536769.1">
    <property type="nucleotide sequence ID" value="NC_003314.1"/>
</dbReference>
<dbReference type="SMR" id="Q8W9M5"/>
<dbReference type="GeneID" id="804490"/>
<dbReference type="CTD" id="4541"/>
<dbReference type="GO" id="GO:0005743">
    <property type="term" value="C:mitochondrial inner membrane"/>
    <property type="evidence" value="ECO:0000250"/>
    <property type="project" value="UniProtKB"/>
</dbReference>
<dbReference type="GO" id="GO:0008137">
    <property type="term" value="F:NADH dehydrogenase (ubiquinone) activity"/>
    <property type="evidence" value="ECO:0000250"/>
    <property type="project" value="UniProtKB"/>
</dbReference>
<dbReference type="GO" id="GO:0006120">
    <property type="term" value="P:mitochondrial electron transport, NADH to ubiquinone"/>
    <property type="evidence" value="ECO:0000250"/>
    <property type="project" value="UniProtKB"/>
</dbReference>
<dbReference type="GO" id="GO:0032981">
    <property type="term" value="P:mitochondrial respiratory chain complex I assembly"/>
    <property type="evidence" value="ECO:0000250"/>
    <property type="project" value="UniProtKB"/>
</dbReference>
<dbReference type="Gene3D" id="1.20.120.1200">
    <property type="entry name" value="NADH-ubiquinone/plastoquinone oxidoreductase chain 6, subunit NuoJ"/>
    <property type="match status" value="1"/>
</dbReference>
<dbReference type="InterPro" id="IPR050269">
    <property type="entry name" value="ComplexI_Subunit6"/>
</dbReference>
<dbReference type="InterPro" id="IPR001457">
    <property type="entry name" value="NADH_UbQ/plastoQ_OxRdtase_su6"/>
</dbReference>
<dbReference type="InterPro" id="IPR042106">
    <property type="entry name" value="Nuo/plastoQ_OxRdtase_6_NuoJ"/>
</dbReference>
<dbReference type="PANTHER" id="PTHR11435">
    <property type="entry name" value="NADH UBIQUINONE OXIDOREDUCTASE SUBUNIT ND6"/>
    <property type="match status" value="1"/>
</dbReference>
<dbReference type="PANTHER" id="PTHR11435:SF1">
    <property type="entry name" value="NADH-UBIQUINONE OXIDOREDUCTASE CHAIN 6"/>
    <property type="match status" value="1"/>
</dbReference>
<dbReference type="Pfam" id="PF00499">
    <property type="entry name" value="Oxidored_q3"/>
    <property type="match status" value="1"/>
</dbReference>
<feature type="chain" id="PRO_0000118280" description="NADH-ubiquinone oxidoreductase chain 6">
    <location>
        <begin position="1"/>
        <end position="175"/>
    </location>
</feature>
<feature type="transmembrane region" description="Helical" evidence="3">
    <location>
        <begin position="1"/>
        <end position="21"/>
    </location>
</feature>
<feature type="transmembrane region" description="Helical" evidence="3">
    <location>
        <begin position="24"/>
        <end position="44"/>
    </location>
</feature>
<feature type="transmembrane region" description="Helical" evidence="3">
    <location>
        <begin position="46"/>
        <end position="66"/>
    </location>
</feature>
<feature type="transmembrane region" description="Helical" evidence="3">
    <location>
        <begin position="86"/>
        <end position="106"/>
    </location>
</feature>
<feature type="transmembrane region" description="Helical" evidence="3">
    <location>
        <begin position="149"/>
        <end position="169"/>
    </location>
</feature>
<gene>
    <name type="primary">MT-ND6</name>
    <name type="synonym">MTND6</name>
    <name type="synonym">NADH6</name>
    <name type="synonym">ND6</name>
</gene>
<proteinExistence type="inferred from homology"/>
<organism>
    <name type="scientific">Dugong dugon</name>
    <name type="common">Dugong</name>
    <name type="synonym">Trichechus dugon</name>
    <dbReference type="NCBI Taxonomy" id="29137"/>
    <lineage>
        <taxon>Eukaryota</taxon>
        <taxon>Metazoa</taxon>
        <taxon>Chordata</taxon>
        <taxon>Craniata</taxon>
        <taxon>Vertebrata</taxon>
        <taxon>Euteleostomi</taxon>
        <taxon>Mammalia</taxon>
        <taxon>Eutheria</taxon>
        <taxon>Afrotheria</taxon>
        <taxon>Sirenia</taxon>
        <taxon>Dugongidae</taxon>
        <taxon>Dugong</taxon>
    </lineage>
</organism>
<accession>Q8W9M5</accession>
<keyword id="KW-0249">Electron transport</keyword>
<keyword id="KW-0472">Membrane</keyword>
<keyword id="KW-0496">Mitochondrion</keyword>
<keyword id="KW-0999">Mitochondrion inner membrane</keyword>
<keyword id="KW-0520">NAD</keyword>
<keyword id="KW-0679">Respiratory chain</keyword>
<keyword id="KW-1278">Translocase</keyword>
<keyword id="KW-0812">Transmembrane</keyword>
<keyword id="KW-1133">Transmembrane helix</keyword>
<keyword id="KW-0813">Transport</keyword>
<keyword id="KW-0830">Ubiquinone</keyword>
<comment type="function">
    <text evidence="1">Core subunit of the mitochondrial membrane respiratory chain NADH dehydrogenase (Complex I) which catalyzes electron transfer from NADH through the respiratory chain, using ubiquinone as an electron acceptor. Essential for the catalytic activity and assembly of complex I.</text>
</comment>
<comment type="catalytic activity">
    <reaction evidence="1">
        <text>a ubiquinone + NADH + 5 H(+)(in) = a ubiquinol + NAD(+) + 4 H(+)(out)</text>
        <dbReference type="Rhea" id="RHEA:29091"/>
        <dbReference type="Rhea" id="RHEA-COMP:9565"/>
        <dbReference type="Rhea" id="RHEA-COMP:9566"/>
        <dbReference type="ChEBI" id="CHEBI:15378"/>
        <dbReference type="ChEBI" id="CHEBI:16389"/>
        <dbReference type="ChEBI" id="CHEBI:17976"/>
        <dbReference type="ChEBI" id="CHEBI:57540"/>
        <dbReference type="ChEBI" id="CHEBI:57945"/>
        <dbReference type="EC" id="7.1.1.2"/>
    </reaction>
</comment>
<comment type="subunit">
    <text evidence="2">Core subunit of respiratory chain NADH dehydrogenase (Complex I) which is composed of 45 different subunits.</text>
</comment>
<comment type="subcellular location">
    <subcellularLocation>
        <location evidence="2">Mitochondrion inner membrane</location>
        <topology evidence="3">Multi-pass membrane protein</topology>
    </subcellularLocation>
</comment>
<comment type="similarity">
    <text evidence="4">Belongs to the complex I subunit 6 family.</text>
</comment>
<name>NU6M_DUGDU</name>
<protein>
    <recommendedName>
        <fullName>NADH-ubiquinone oxidoreductase chain 6</fullName>
        <ecNumber evidence="1">7.1.1.2</ecNumber>
    </recommendedName>
    <alternativeName>
        <fullName>NADH dehydrogenase subunit 6</fullName>
    </alternativeName>
</protein>
<geneLocation type="mitochondrion"/>
<reference key="1">
    <citation type="journal article" date="2002" name="Proc. Natl. Acad. Sci. U.S.A.">
        <title>Mammalian mitogenomic relationships and the root of the eutherian tree.</title>
        <authorList>
            <person name="Arnason U."/>
            <person name="Adegoke J.A."/>
            <person name="Bodin K."/>
            <person name="Born E.W."/>
            <person name="Esa Y.B."/>
            <person name="Gullberg A."/>
            <person name="Nilsson M."/>
            <person name="Short R.V."/>
            <person name="Xu X."/>
            <person name="Janke A."/>
        </authorList>
    </citation>
    <scope>NUCLEOTIDE SEQUENCE [GENOMIC DNA]</scope>
</reference>
<evidence type="ECO:0000250" key="1">
    <source>
        <dbReference type="UniProtKB" id="P03923"/>
    </source>
</evidence>
<evidence type="ECO:0000250" key="2">
    <source>
        <dbReference type="UniProtKB" id="P03924"/>
    </source>
</evidence>
<evidence type="ECO:0000255" key="3"/>
<evidence type="ECO:0000305" key="4"/>
<sequence length="175" mass="18441">MMYTVFVMSVLFVVGFVGVSSKPSPVYGGLGLVASGGVGCGIVVSFGGSFLGLMVFLVYLGGMMVVFGYTTAMATDEYPEAWGSNIVVLGALVGGLLMEGAAVVYLFSGGGLELVGLDLGSLENWMVFGGEGEELIREDYVGGSSLYSYGCWFMVMSGWMLFISVFIVIEVTRGR</sequence>